<dbReference type="EC" id="1.11.1.21" evidence="1"/>
<dbReference type="EMBL" id="CP000356">
    <property type="protein sequence ID" value="ABF53855.1"/>
    <property type="molecule type" value="Genomic_DNA"/>
</dbReference>
<dbReference type="RefSeq" id="WP_011542431.1">
    <property type="nucleotide sequence ID" value="NC_008048.1"/>
</dbReference>
<dbReference type="SMR" id="Q1GR67"/>
<dbReference type="STRING" id="317655.Sala_2146"/>
<dbReference type="KEGG" id="sal:Sala_2146"/>
<dbReference type="eggNOG" id="COG0376">
    <property type="taxonomic scope" value="Bacteria"/>
</dbReference>
<dbReference type="HOGENOM" id="CLU_025424_2_0_5"/>
<dbReference type="OrthoDB" id="9759743at2"/>
<dbReference type="Proteomes" id="UP000006578">
    <property type="component" value="Chromosome"/>
</dbReference>
<dbReference type="GO" id="GO:0005829">
    <property type="term" value="C:cytosol"/>
    <property type="evidence" value="ECO:0007669"/>
    <property type="project" value="TreeGrafter"/>
</dbReference>
<dbReference type="GO" id="GO:0004096">
    <property type="term" value="F:catalase activity"/>
    <property type="evidence" value="ECO:0007669"/>
    <property type="project" value="UniProtKB-UniRule"/>
</dbReference>
<dbReference type="GO" id="GO:0020037">
    <property type="term" value="F:heme binding"/>
    <property type="evidence" value="ECO:0007669"/>
    <property type="project" value="InterPro"/>
</dbReference>
<dbReference type="GO" id="GO:0046872">
    <property type="term" value="F:metal ion binding"/>
    <property type="evidence" value="ECO:0007669"/>
    <property type="project" value="UniProtKB-KW"/>
</dbReference>
<dbReference type="GO" id="GO:0070301">
    <property type="term" value="P:cellular response to hydrogen peroxide"/>
    <property type="evidence" value="ECO:0007669"/>
    <property type="project" value="TreeGrafter"/>
</dbReference>
<dbReference type="GO" id="GO:0042744">
    <property type="term" value="P:hydrogen peroxide catabolic process"/>
    <property type="evidence" value="ECO:0007669"/>
    <property type="project" value="UniProtKB-KW"/>
</dbReference>
<dbReference type="CDD" id="cd08200">
    <property type="entry name" value="catalase_peroxidase_2"/>
    <property type="match status" value="1"/>
</dbReference>
<dbReference type="FunFam" id="1.10.520.10:FF:000002">
    <property type="entry name" value="Catalase-peroxidase"/>
    <property type="match status" value="1"/>
</dbReference>
<dbReference type="Gene3D" id="1.10.520.10">
    <property type="match status" value="2"/>
</dbReference>
<dbReference type="Gene3D" id="1.10.420.10">
    <property type="entry name" value="Peroxidase, domain 2"/>
    <property type="match status" value="2"/>
</dbReference>
<dbReference type="HAMAP" id="MF_01961">
    <property type="entry name" value="Catal_peroxid"/>
    <property type="match status" value="1"/>
</dbReference>
<dbReference type="InterPro" id="IPR000763">
    <property type="entry name" value="Catalase_peroxidase"/>
</dbReference>
<dbReference type="InterPro" id="IPR002016">
    <property type="entry name" value="Haem_peroxidase"/>
</dbReference>
<dbReference type="InterPro" id="IPR010255">
    <property type="entry name" value="Haem_peroxidase_sf"/>
</dbReference>
<dbReference type="InterPro" id="IPR019794">
    <property type="entry name" value="Peroxidases_AS"/>
</dbReference>
<dbReference type="NCBIfam" id="TIGR00198">
    <property type="entry name" value="cat_per_HPI"/>
    <property type="match status" value="1"/>
</dbReference>
<dbReference type="NCBIfam" id="NF011635">
    <property type="entry name" value="PRK15061.1"/>
    <property type="match status" value="1"/>
</dbReference>
<dbReference type="PANTHER" id="PTHR30555:SF6">
    <property type="entry name" value="CATALASE-PEROXIDASE"/>
    <property type="match status" value="1"/>
</dbReference>
<dbReference type="PANTHER" id="PTHR30555">
    <property type="entry name" value="HYDROPEROXIDASE I, BIFUNCTIONAL CATALASE-PEROXIDASE"/>
    <property type="match status" value="1"/>
</dbReference>
<dbReference type="Pfam" id="PF00141">
    <property type="entry name" value="peroxidase"/>
    <property type="match status" value="2"/>
</dbReference>
<dbReference type="PRINTS" id="PR00460">
    <property type="entry name" value="BPEROXIDASE"/>
</dbReference>
<dbReference type="PRINTS" id="PR00458">
    <property type="entry name" value="PEROXIDASE"/>
</dbReference>
<dbReference type="SUPFAM" id="SSF48113">
    <property type="entry name" value="Heme-dependent peroxidases"/>
    <property type="match status" value="2"/>
</dbReference>
<dbReference type="PROSITE" id="PS00436">
    <property type="entry name" value="PEROXIDASE_2"/>
    <property type="match status" value="1"/>
</dbReference>
<dbReference type="PROSITE" id="PS50873">
    <property type="entry name" value="PEROXIDASE_4"/>
    <property type="match status" value="1"/>
</dbReference>
<keyword id="KW-0349">Heme</keyword>
<keyword id="KW-0376">Hydrogen peroxide</keyword>
<keyword id="KW-0408">Iron</keyword>
<keyword id="KW-0479">Metal-binding</keyword>
<keyword id="KW-0560">Oxidoreductase</keyword>
<keyword id="KW-0575">Peroxidase</keyword>
<keyword id="KW-1185">Reference proteome</keyword>
<evidence type="ECO:0000255" key="1">
    <source>
        <dbReference type="HAMAP-Rule" id="MF_01961"/>
    </source>
</evidence>
<gene>
    <name evidence="1" type="primary">katG</name>
    <name type="ordered locus">Sala_2146</name>
</gene>
<comment type="function">
    <text evidence="1">Bifunctional enzyme with both catalase and broad-spectrum peroxidase activity.</text>
</comment>
<comment type="catalytic activity">
    <reaction evidence="1">
        <text>H2O2 + AH2 = A + 2 H2O</text>
        <dbReference type="Rhea" id="RHEA:30275"/>
        <dbReference type="ChEBI" id="CHEBI:13193"/>
        <dbReference type="ChEBI" id="CHEBI:15377"/>
        <dbReference type="ChEBI" id="CHEBI:16240"/>
        <dbReference type="ChEBI" id="CHEBI:17499"/>
        <dbReference type="EC" id="1.11.1.21"/>
    </reaction>
</comment>
<comment type="catalytic activity">
    <reaction evidence="1">
        <text>2 H2O2 = O2 + 2 H2O</text>
        <dbReference type="Rhea" id="RHEA:20309"/>
        <dbReference type="ChEBI" id="CHEBI:15377"/>
        <dbReference type="ChEBI" id="CHEBI:15379"/>
        <dbReference type="ChEBI" id="CHEBI:16240"/>
        <dbReference type="EC" id="1.11.1.21"/>
    </reaction>
</comment>
<comment type="cofactor">
    <cofactor evidence="1">
        <name>heme b</name>
        <dbReference type="ChEBI" id="CHEBI:60344"/>
    </cofactor>
    <text evidence="1">Binds 1 heme b (iron(II)-protoporphyrin IX) group per dimer.</text>
</comment>
<comment type="subunit">
    <text evidence="1">Homodimer or homotetramer.</text>
</comment>
<comment type="PTM">
    <text evidence="1">Formation of the three residue Trp-Tyr-Met cross-link is important for the catalase, but not the peroxidase activity of the enzyme.</text>
</comment>
<comment type="similarity">
    <text evidence="1">Belongs to the peroxidase family. Peroxidase/catalase subfamily.</text>
</comment>
<name>KATG_SPHAL</name>
<feature type="chain" id="PRO_0000354937" description="Catalase-peroxidase">
    <location>
        <begin position="1"/>
        <end position="731"/>
    </location>
</feature>
<feature type="active site" description="Proton acceptor" evidence="1">
    <location>
        <position position="99"/>
    </location>
</feature>
<feature type="binding site" description="axial binding residue" evidence="1">
    <location>
        <position position="269"/>
    </location>
    <ligand>
        <name>heme b</name>
        <dbReference type="ChEBI" id="CHEBI:60344"/>
    </ligand>
    <ligandPart>
        <name>Fe</name>
        <dbReference type="ChEBI" id="CHEBI:18248"/>
    </ligandPart>
</feature>
<feature type="site" description="Transition state stabilizer" evidence="1">
    <location>
        <position position="95"/>
    </location>
</feature>
<feature type="cross-link" description="Tryptophyl-tyrosyl-methioninium (Trp-Tyr) (with M-254)" evidence="1">
    <location>
        <begin position="98"/>
        <end position="227"/>
    </location>
</feature>
<feature type="cross-link" description="Tryptophyl-tyrosyl-methioninium (Tyr-Met) (with W-98)" evidence="1">
    <location>
        <begin position="227"/>
        <end position="254"/>
    </location>
</feature>
<reference key="1">
    <citation type="journal article" date="2009" name="Proc. Natl. Acad. Sci. U.S.A.">
        <title>The genomic basis of trophic strategy in marine bacteria.</title>
        <authorList>
            <person name="Lauro F.M."/>
            <person name="McDougald D."/>
            <person name="Thomas T."/>
            <person name="Williams T.J."/>
            <person name="Egan S."/>
            <person name="Rice S."/>
            <person name="DeMaere M.Z."/>
            <person name="Ting L."/>
            <person name="Ertan H."/>
            <person name="Johnson J."/>
            <person name="Ferriera S."/>
            <person name="Lapidus A."/>
            <person name="Anderson I."/>
            <person name="Kyrpides N."/>
            <person name="Munk A.C."/>
            <person name="Detter C."/>
            <person name="Han C.S."/>
            <person name="Brown M.V."/>
            <person name="Robb F.T."/>
            <person name="Kjelleberg S."/>
            <person name="Cavicchioli R."/>
        </authorList>
    </citation>
    <scope>NUCLEOTIDE SEQUENCE [LARGE SCALE GENOMIC DNA]</scope>
    <source>
        <strain>DSM 13593 / LMG 18877 / RB2256</strain>
    </source>
</reference>
<organism>
    <name type="scientific">Sphingopyxis alaskensis (strain DSM 13593 / LMG 18877 / RB2256)</name>
    <name type="common">Sphingomonas alaskensis</name>
    <dbReference type="NCBI Taxonomy" id="317655"/>
    <lineage>
        <taxon>Bacteria</taxon>
        <taxon>Pseudomonadati</taxon>
        <taxon>Pseudomonadota</taxon>
        <taxon>Alphaproteobacteria</taxon>
        <taxon>Sphingomonadales</taxon>
        <taxon>Sphingomonadaceae</taxon>
        <taxon>Sphingopyxis</taxon>
    </lineage>
</organism>
<sequence length="731" mass="80470">MNDQTPIGSGCPVHQPGGVRSLLGRTNKDWWPDMLATEILTPNGPSNPMGEDFDYAKAFKSLDYYALKDDLKALMTDSQPWWPADYGHYGPFFIRMAWHAAGTYRTADGRGGANSGQQRFAPLDSWPDNGNLDKARRLLWPIKQKYGNKISWADLFILAGNVAIESMGGPVFGFGGGRVDVYEPERDIYWGSEDKWVNQGVQTRIDPAKGMETIEGPLAAIQMGLIYVNPEGPQGNPHDDEGMARDMKETFKRMAMNDEETVALTAGGHTFGKAHGNGDPSLLGPAPAGSDLAAQGFGWVSSHESGGIGEHAVTSGIEGAWTNTPREWTENYFRLLFDYDYELVKSPAGAWQWQPINQKEEDMAPAAWDPGIKVPTMMTTADMALKRDPAYRAISERFRNDHEAFKDAFARAWFKLTHRDMGPKVRYLGPEVPDEDLIWQDPIPAGTKPSDAEVQAVKDKIAASGLTVSQLIKTAWASASTFRKSDFRGGANGARVRLAPQKDWEVNEPAMLARVLDTLDGLRGSLSMADAIVLGGVVGLEKAIRDAGFNVAVPFTGGRGDATQEQTDVESFEVMEPEADAFRNYVGKKKLAVKVEEMMLDKASLLGLSVPEMTVLIGGLRVLGANHGERGHGHFTRRSGQLTNDFFVNLLDMTNVWKAVEGSNDQEYVATDRTTGGETWRATRADLIFGSNSELRAVAEVYAENGHEEKFVRDFVKAWTKVMNADRFDLA</sequence>
<protein>
    <recommendedName>
        <fullName evidence="1">Catalase-peroxidase</fullName>
        <shortName evidence="1">CP</shortName>
        <ecNumber evidence="1">1.11.1.21</ecNumber>
    </recommendedName>
    <alternativeName>
        <fullName evidence="1">Peroxidase/catalase</fullName>
    </alternativeName>
</protein>
<accession>Q1GR67</accession>
<proteinExistence type="inferred from homology"/>